<reference key="1">
    <citation type="journal article" date="1995" name="J. Biol. Chem.">
        <title>35H, a sequence isolated as a protein kinase C binding protein, is a novel member of the adducin family.</title>
        <authorList>
            <person name="Dong L."/>
            <person name="Chapline C."/>
            <person name="Mousseau B."/>
            <person name="Fowler L."/>
            <person name="Ramsay K."/>
            <person name="Stevens J.L."/>
            <person name="Jaken S."/>
        </authorList>
    </citation>
    <scope>NUCLEOTIDE SEQUENCE [MRNA] (ISOFORM 1)</scope>
    <scope>SUBUNIT</scope>
    <scope>INTERACTION WITH ADD1</scope>
    <scope>SUBCELLULAR LOCATION</scope>
    <source>
        <strain>Sprague-Dawley</strain>
        <tissue>Kidney</tissue>
    </source>
</reference>
<reference key="2">
    <citation type="journal article" date="1997" name="Biochem. Biophys. Res. Commun.">
        <title>Polymorphism of gamma-adducin gene in genetic hypertension and mapping of the gene to rat chromosome 1q55.</title>
        <authorList>
            <person name="Tripodi G."/>
            <person name="Szpirer C."/>
            <person name="Reina C."/>
            <person name="Szpirer J."/>
            <person name="Bianchi G."/>
        </authorList>
    </citation>
    <scope>NUCLEOTIDE SEQUENCE [MRNA] (ISOFORM 2)</scope>
    <scope>TISSUE SPECIFICITY</scope>
    <scope>VARIANT GLN-572</scope>
    <source>
        <strain evidence="14">Milan</strain>
    </source>
</reference>
<reference evidence="17" key="3">
    <citation type="journal article" date="2004" name="Nature">
        <title>Genome sequence of the Brown Norway rat yields insights into mammalian evolution.</title>
        <authorList>
            <person name="Gibbs R.A."/>
            <person name="Weinstock G.M."/>
            <person name="Metzker M.L."/>
            <person name="Muzny D.M."/>
            <person name="Sodergren E.J."/>
            <person name="Scherer S."/>
            <person name="Scott G."/>
            <person name="Steffen D."/>
            <person name="Worley K.C."/>
            <person name="Burch P.E."/>
            <person name="Okwuonu G."/>
            <person name="Hines S."/>
            <person name="Lewis L."/>
            <person name="Deramo C."/>
            <person name="Delgado O."/>
            <person name="Dugan-Rocha S."/>
            <person name="Miner G."/>
            <person name="Morgan M."/>
            <person name="Hawes A."/>
            <person name="Gill R."/>
            <person name="Holt R.A."/>
            <person name="Adams M.D."/>
            <person name="Amanatides P.G."/>
            <person name="Baden-Tillson H."/>
            <person name="Barnstead M."/>
            <person name="Chin S."/>
            <person name="Evans C.A."/>
            <person name="Ferriera S."/>
            <person name="Fosler C."/>
            <person name="Glodek A."/>
            <person name="Gu Z."/>
            <person name="Jennings D."/>
            <person name="Kraft C.L."/>
            <person name="Nguyen T."/>
            <person name="Pfannkoch C.M."/>
            <person name="Sitter C."/>
            <person name="Sutton G.G."/>
            <person name="Venter J.C."/>
            <person name="Woodage T."/>
            <person name="Smith D."/>
            <person name="Lee H.-M."/>
            <person name="Gustafson E."/>
            <person name="Cahill P."/>
            <person name="Kana A."/>
            <person name="Doucette-Stamm L."/>
            <person name="Weinstock K."/>
            <person name="Fechtel K."/>
            <person name="Weiss R.B."/>
            <person name="Dunn D.M."/>
            <person name="Green E.D."/>
            <person name="Blakesley R.W."/>
            <person name="Bouffard G.G."/>
            <person name="De Jong P.J."/>
            <person name="Osoegawa K."/>
            <person name="Zhu B."/>
            <person name="Marra M."/>
            <person name="Schein J."/>
            <person name="Bosdet I."/>
            <person name="Fjell C."/>
            <person name="Jones S."/>
            <person name="Krzywinski M."/>
            <person name="Mathewson C."/>
            <person name="Siddiqui A."/>
            <person name="Wye N."/>
            <person name="McPherson J."/>
            <person name="Zhao S."/>
            <person name="Fraser C.M."/>
            <person name="Shetty J."/>
            <person name="Shatsman S."/>
            <person name="Geer K."/>
            <person name="Chen Y."/>
            <person name="Abramzon S."/>
            <person name="Nierman W.C."/>
            <person name="Havlak P.H."/>
            <person name="Chen R."/>
            <person name="Durbin K.J."/>
            <person name="Egan A."/>
            <person name="Ren Y."/>
            <person name="Song X.-Z."/>
            <person name="Li B."/>
            <person name="Liu Y."/>
            <person name="Qin X."/>
            <person name="Cawley S."/>
            <person name="Cooney A.J."/>
            <person name="D'Souza L.M."/>
            <person name="Martin K."/>
            <person name="Wu J.Q."/>
            <person name="Gonzalez-Garay M.L."/>
            <person name="Jackson A.R."/>
            <person name="Kalafus K.J."/>
            <person name="McLeod M.P."/>
            <person name="Milosavljevic A."/>
            <person name="Virk D."/>
            <person name="Volkov A."/>
            <person name="Wheeler D.A."/>
            <person name="Zhang Z."/>
            <person name="Bailey J.A."/>
            <person name="Eichler E.E."/>
            <person name="Tuzun E."/>
            <person name="Birney E."/>
            <person name="Mongin E."/>
            <person name="Ureta-Vidal A."/>
            <person name="Woodwark C."/>
            <person name="Zdobnov E."/>
            <person name="Bork P."/>
            <person name="Suyama M."/>
            <person name="Torrents D."/>
            <person name="Alexandersson M."/>
            <person name="Trask B.J."/>
            <person name="Young J.M."/>
            <person name="Huang H."/>
            <person name="Wang H."/>
            <person name="Xing H."/>
            <person name="Daniels S."/>
            <person name="Gietzen D."/>
            <person name="Schmidt J."/>
            <person name="Stevens K."/>
            <person name="Vitt U."/>
            <person name="Wingrove J."/>
            <person name="Camara F."/>
            <person name="Mar Alba M."/>
            <person name="Abril J.F."/>
            <person name="Guigo R."/>
            <person name="Smit A."/>
            <person name="Dubchak I."/>
            <person name="Rubin E.M."/>
            <person name="Couronne O."/>
            <person name="Poliakov A."/>
            <person name="Huebner N."/>
            <person name="Ganten D."/>
            <person name="Goesele C."/>
            <person name="Hummel O."/>
            <person name="Kreitler T."/>
            <person name="Lee Y.-A."/>
            <person name="Monti J."/>
            <person name="Schulz H."/>
            <person name="Zimdahl H."/>
            <person name="Himmelbauer H."/>
            <person name="Lehrach H."/>
            <person name="Jacob H.J."/>
            <person name="Bromberg S."/>
            <person name="Gullings-Handley J."/>
            <person name="Jensen-Seaman M.I."/>
            <person name="Kwitek A.E."/>
            <person name="Lazar J."/>
            <person name="Pasko D."/>
            <person name="Tonellato P.J."/>
            <person name="Twigger S."/>
            <person name="Ponting C.P."/>
            <person name="Duarte J.M."/>
            <person name="Rice S."/>
            <person name="Goodstadt L."/>
            <person name="Beatson S.A."/>
            <person name="Emes R.D."/>
            <person name="Winter E.E."/>
            <person name="Webber C."/>
            <person name="Brandt P."/>
            <person name="Nyakatura G."/>
            <person name="Adetobi M."/>
            <person name="Chiaromonte F."/>
            <person name="Elnitski L."/>
            <person name="Eswara P."/>
            <person name="Hardison R.C."/>
            <person name="Hou M."/>
            <person name="Kolbe D."/>
            <person name="Makova K."/>
            <person name="Miller W."/>
            <person name="Nekrutenko A."/>
            <person name="Riemer C."/>
            <person name="Schwartz S."/>
            <person name="Taylor J."/>
            <person name="Yang S."/>
            <person name="Zhang Y."/>
            <person name="Lindpaintner K."/>
            <person name="Andrews T.D."/>
            <person name="Caccamo M."/>
            <person name="Clamp M."/>
            <person name="Clarke L."/>
            <person name="Curwen V."/>
            <person name="Durbin R.M."/>
            <person name="Eyras E."/>
            <person name="Searle S.M."/>
            <person name="Cooper G.M."/>
            <person name="Batzoglou S."/>
            <person name="Brudno M."/>
            <person name="Sidow A."/>
            <person name="Stone E.A."/>
            <person name="Payseur B.A."/>
            <person name="Bourque G."/>
            <person name="Lopez-Otin C."/>
            <person name="Puente X.S."/>
            <person name="Chakrabarti K."/>
            <person name="Chatterji S."/>
            <person name="Dewey C."/>
            <person name="Pachter L."/>
            <person name="Bray N."/>
            <person name="Yap V.B."/>
            <person name="Caspi A."/>
            <person name="Tesler G."/>
            <person name="Pevzner P.A."/>
            <person name="Haussler D."/>
            <person name="Roskin K.M."/>
            <person name="Baertsch R."/>
            <person name="Clawson H."/>
            <person name="Furey T.S."/>
            <person name="Hinrichs A.S."/>
            <person name="Karolchik D."/>
            <person name="Kent W.J."/>
            <person name="Rosenbloom K.R."/>
            <person name="Trumbower H."/>
            <person name="Weirauch M."/>
            <person name="Cooper D.N."/>
            <person name="Stenson P.D."/>
            <person name="Ma B."/>
            <person name="Brent M."/>
            <person name="Arumugam M."/>
            <person name="Shteynberg D."/>
            <person name="Copley R.R."/>
            <person name="Taylor M.S."/>
            <person name="Riethman H."/>
            <person name="Mudunuri U."/>
            <person name="Peterson J."/>
            <person name="Guyer M."/>
            <person name="Felsenfeld A."/>
            <person name="Old S."/>
            <person name="Mockrin S."/>
            <person name="Collins F.S."/>
        </authorList>
    </citation>
    <scope>NUCLEOTIDE SEQUENCE [LARGE SCALE GENOMIC DNA]</scope>
    <source>
        <strain evidence="17">Brown Norway</strain>
    </source>
</reference>
<reference evidence="16" key="4">
    <citation type="journal article" date="2005" name="Genome Res.">
        <title>Gene and alternative splicing annotation with AIR.</title>
        <authorList>
            <person name="Florea L."/>
            <person name="Di Francesco V."/>
            <person name="Miller J."/>
            <person name="Turner R."/>
            <person name="Yao A."/>
            <person name="Harris M."/>
            <person name="Walenz B."/>
            <person name="Mobarry C."/>
            <person name="Merkulov G.V."/>
            <person name="Charlab R."/>
            <person name="Dew I."/>
            <person name="Deng Z."/>
            <person name="Istrail S."/>
            <person name="Li P."/>
            <person name="Sutton G."/>
        </authorList>
    </citation>
    <scope>NUCLEOTIDE SEQUENCE [LARGE SCALE GENOMIC DNA]</scope>
    <source>
        <strain evidence="16">Brown Norway</strain>
    </source>
</reference>
<reference key="5">
    <citation type="journal article" date="2012" name="Nat. Commun.">
        <title>Quantitative maps of protein phosphorylation sites across 14 different rat organs and tissues.</title>
        <authorList>
            <person name="Lundby A."/>
            <person name="Secher A."/>
            <person name="Lage K."/>
            <person name="Nordsborg N.B."/>
            <person name="Dmytriyev A."/>
            <person name="Lundby C."/>
            <person name="Olsen J.V."/>
        </authorList>
    </citation>
    <scope>PHOSPHORYLATION [LARGE SCALE ANALYSIS] AT SER-423; SER-583; SER-585; SER-672; SER-676 AND SER-680</scope>
    <scope>IDENTIFICATION BY MASS SPECTROMETRY [LARGE SCALE ANALYSIS]</scope>
</reference>
<reference key="6">
    <citation type="journal article" date="2017" name="Am. J. Physiol.">
        <title>Knockdown of Add3 impairs the myogenic response of renal afferent arterioles and middle cerebral arteries.</title>
        <authorList>
            <person name="Fan F."/>
            <person name="Pabbidi M.R."/>
            <person name="Ge Y."/>
            <person name="Li L."/>
            <person name="Wang S."/>
            <person name="Mims P.N."/>
            <person name="Roman R.J."/>
        </authorList>
    </citation>
    <scope>FUNCTION</scope>
    <scope>DISRUPTION PHENOTYPE</scope>
</reference>
<reference key="7">
    <citation type="journal article" date="2020" name="Am. J. Physiol.">
        <title>Impaired renal hemodynamics and glomerular hyperfiltration contribute to hypertension-induced renal injury.</title>
        <authorList>
            <person name="Fan L."/>
            <person name="Gao W."/>
            <person name="Nguyen B.V."/>
            <person name="Jefferson J.R."/>
            <person name="Liu Y."/>
            <person name="Fan F."/>
            <person name="Roman R.J."/>
        </authorList>
    </citation>
    <scope>FUNCTION</scope>
    <scope>TISSUE SPECIFICITY</scope>
    <scope>DISRUPTION PHENOTYPE</scope>
</reference>
<reference key="8">
    <citation type="journal article" date="2020" name="J. Am. Soc. Nephrol.">
        <title>A Mutation in gamma-Adducin Impairs Autoregulation of Renal Blood Flow and Promotes the Development of Kidney Disease.</title>
        <authorList>
            <person name="Fan F."/>
            <person name="Geurts A.M."/>
            <person name="Pabbidi M.R."/>
            <person name="Ge Y."/>
            <person name="Zhang C."/>
            <person name="Wang S."/>
            <person name="Liu Y."/>
            <person name="Gao W."/>
            <person name="Guo Y."/>
            <person name="Li L."/>
            <person name="He X."/>
            <person name="Lv W."/>
            <person name="Muroya Y."/>
            <person name="Hirata T."/>
            <person name="Prokop J."/>
            <person name="Booz G.W."/>
            <person name="Jacob H.J."/>
            <person name="Roman R.J."/>
        </authorList>
    </citation>
    <scope>FUNCTION</scope>
    <scope>SUBCELLULAR LOCATION</scope>
    <scope>TISSUE SPECIFICITY</scope>
    <scope>DISRUPTION PHENOTYPE</scope>
    <scope>VARIANT GLN-572</scope>
    <scope>CHARACTERIZATION OF VARIANT GLN-572</scope>
</reference>
<reference key="9">
    <citation type="journal article" date="2021" name="Am. J. Physiol.">
        <title>Role of gamma-adducin in actin cytoskeleton rearrangements in podocyte pathophysiology.</title>
        <authorList>
            <person name="Gao W."/>
            <person name="Liu Y."/>
            <person name="Fan L."/>
            <person name="Zheng B."/>
            <person name="Jefferson J.R."/>
            <person name="Wang S."/>
            <person name="Zhang H."/>
            <person name="Fang X."/>
            <person name="Nguyen B.V."/>
            <person name="Zhu T."/>
            <person name="Roman R.J."/>
            <person name="Fan F."/>
        </authorList>
    </citation>
    <scope>FUNCTION</scope>
    <scope>SUBCELLULAR LOCATION</scope>
    <scope>TISSUE SPECIFICITY</scope>
</reference>
<reference key="10">
    <citation type="journal article" date="2021" name="J. Pharmacol. Exp. Ther.">
        <title>Knockout of gamma-Adducin Promotes NG-Nitro-L-Arginine-Methyl-Ester-Induced Hypertensive Renal Injury.</title>
        <authorList>
            <person name="Fan L."/>
            <person name="Gao W."/>
            <person name="Liu Y."/>
            <person name="Jefferson J.R."/>
            <person name="Fan F."/>
            <person name="Roman R.J."/>
        </authorList>
    </citation>
    <scope>FUNCTION</scope>
    <scope>DISRUPTION PHENOTYPE</scope>
</reference>
<protein>
    <recommendedName>
        <fullName evidence="13">Gamma-adducin</fullName>
    </recommendedName>
    <alternativeName>
        <fullName>Adducin-like protein 70</fullName>
    </alternativeName>
    <alternativeName>
        <fullName evidence="13">Protein kinase C-binding protein 35H</fullName>
    </alternativeName>
</protein>
<keyword id="KW-0007">Acetylation</keyword>
<keyword id="KW-0009">Actin-binding</keyword>
<keyword id="KW-0025">Alternative splicing</keyword>
<keyword id="KW-0112">Calmodulin-binding</keyword>
<keyword id="KW-1003">Cell membrane</keyword>
<keyword id="KW-0963">Cytoplasm</keyword>
<keyword id="KW-0206">Cytoskeleton</keyword>
<keyword id="KW-1017">Isopeptide bond</keyword>
<keyword id="KW-0472">Membrane</keyword>
<keyword id="KW-0597">Phosphoprotein</keyword>
<keyword id="KW-1185">Reference proteome</keyword>
<keyword id="KW-0832">Ubl conjugation</keyword>
<proteinExistence type="evidence at protein level"/>
<gene>
    <name type="primary">Add3</name>
</gene>
<accession>Q62847</accession>
<accession>D3ZCH7</accession>
<accession>G3V9D7</accession>
<evidence type="ECO:0000250" key="1"/>
<evidence type="ECO:0000250" key="2">
    <source>
        <dbReference type="UniProtKB" id="Q9QYB5"/>
    </source>
</evidence>
<evidence type="ECO:0000250" key="3">
    <source>
        <dbReference type="UniProtKB" id="Q9UEY8"/>
    </source>
</evidence>
<evidence type="ECO:0000255" key="4"/>
<evidence type="ECO:0000256" key="5">
    <source>
        <dbReference type="SAM" id="MobiDB-lite"/>
    </source>
</evidence>
<evidence type="ECO:0000269" key="6">
    <source>
    </source>
</evidence>
<evidence type="ECO:0000269" key="7">
    <source>
    </source>
</evidence>
<evidence type="ECO:0000269" key="8">
    <source>
    </source>
</evidence>
<evidence type="ECO:0000269" key="9">
    <source>
    </source>
</evidence>
<evidence type="ECO:0000269" key="10">
    <source>
    </source>
</evidence>
<evidence type="ECO:0000269" key="11">
    <source>
    </source>
</evidence>
<evidence type="ECO:0000269" key="12">
    <source>
    </source>
</evidence>
<evidence type="ECO:0000303" key="13">
    <source>
    </source>
</evidence>
<evidence type="ECO:0000303" key="14">
    <source>
    </source>
</evidence>
<evidence type="ECO:0000305" key="15"/>
<evidence type="ECO:0000312" key="16">
    <source>
        <dbReference type="EMBL" id="EDL94414.1"/>
    </source>
</evidence>
<evidence type="ECO:0000312" key="17">
    <source>
        <dbReference type="Proteomes" id="UP000002494"/>
    </source>
</evidence>
<evidence type="ECO:0007744" key="18">
    <source>
    </source>
</evidence>
<organism>
    <name type="scientific">Rattus norvegicus</name>
    <name type="common">Rat</name>
    <dbReference type="NCBI Taxonomy" id="10116"/>
    <lineage>
        <taxon>Eukaryota</taxon>
        <taxon>Metazoa</taxon>
        <taxon>Chordata</taxon>
        <taxon>Craniata</taxon>
        <taxon>Vertebrata</taxon>
        <taxon>Euteleostomi</taxon>
        <taxon>Mammalia</taxon>
        <taxon>Eutheria</taxon>
        <taxon>Euarchontoglires</taxon>
        <taxon>Glires</taxon>
        <taxon>Rodentia</taxon>
        <taxon>Myomorpha</taxon>
        <taxon>Muroidea</taxon>
        <taxon>Muridae</taxon>
        <taxon>Murinae</taxon>
        <taxon>Rattus</taxon>
    </lineage>
</organism>
<sequence length="705" mass="78818">MSSDTSQAVITTPPPPSMPHKERYFDRINESDPEYLRERNMSPDLRQDFNMMEQRKRVTQILQSPAFREDLECLIQEQMKKGHDPTGLLALQQIADYIMANSFTGFSSPPLSLGMVTPINDLPGADTSSYVKGEKLTRCKLASLYRLADLFGWAHLANTYISVRVSKEQDHIIIIPRGLSFSEATASALVKVNIIGEVVDQGSTNLKIDHSGFSPHAAIYSTRPDVKCVIHIHTLATAAVSSMKCGILPISQESLILGDVAYYDYQGSLDEEEERIELQKVLGPSCKVLVLRNHGVVALGETLEEAFHYIFNVQMACEIQVQAVAGAGGVDNLLILDLQKYKAFTHGVAMTGGGGVNMGSHQKWKVGEIEFEGLMRTLDNLGYRTGYAYRHPLVREKPRHKSDVEIPATVTAFSFEDDSVPLSPLKYMAQRQQREKTRWLNSPNTYMKVNVPEESRNGETSPRTKITWMKAEDPSKVSSGTPIKIEDPNQFVPLNTNPTEVLEKRNKIREQNRYDLKTAGPQSQLLAGIVVDKPPSTMRFEDDDQGPPAPPNPFSHLMEGELEEYTKTIERKQQGLDDAEQESLSDDAASVSQIQSQTQSPQSVPERLEENHELFSKSFTSVDVPVIVNGKDEMHDVEDELAQRVSRLTTSTTIENIEITIKSPDRTEEVLSPDGSPSKSPSKKKKKFRTPSFLKKNKKKEKVEA</sequence>
<feature type="initiator methionine" description="Removed" evidence="3">
    <location>
        <position position="1"/>
    </location>
</feature>
<feature type="chain" id="PRO_0000218538" description="Gamma-adducin">
    <location>
        <begin position="2"/>
        <end position="705"/>
    </location>
</feature>
<feature type="region of interest" description="Disordered" evidence="5">
    <location>
        <begin position="1"/>
        <end position="22"/>
    </location>
</feature>
<feature type="region of interest" description="Disordered" evidence="5">
    <location>
        <begin position="472"/>
        <end position="495"/>
    </location>
</feature>
<feature type="region of interest" description="Disordered" evidence="5">
    <location>
        <begin position="535"/>
        <end position="556"/>
    </location>
</feature>
<feature type="region of interest" description="Disordered" evidence="5">
    <location>
        <begin position="572"/>
        <end position="612"/>
    </location>
</feature>
<feature type="region of interest" description="Disordered" evidence="5">
    <location>
        <begin position="658"/>
        <end position="705"/>
    </location>
</feature>
<feature type="region of interest" description="Interaction with calmodulin" evidence="4">
    <location>
        <begin position="683"/>
        <end position="700"/>
    </location>
</feature>
<feature type="compositionally biased region" description="Polar residues" evidence="5">
    <location>
        <begin position="1"/>
        <end position="10"/>
    </location>
</feature>
<feature type="compositionally biased region" description="Low complexity" evidence="5">
    <location>
        <begin position="590"/>
        <end position="605"/>
    </location>
</feature>
<feature type="compositionally biased region" description="Basic residues" evidence="5">
    <location>
        <begin position="681"/>
        <end position="705"/>
    </location>
</feature>
<feature type="site" description="Cleavage by asparagine endopeptidase (AEP)" evidence="2">
    <location>
        <position position="357"/>
    </location>
</feature>
<feature type="modified residue" description="N-acetylserine" evidence="3">
    <location>
        <position position="2"/>
    </location>
</feature>
<feature type="modified residue" description="Phosphoserine" evidence="2">
    <location>
        <position position="31"/>
    </location>
</feature>
<feature type="modified residue" description="Phosphoserine" evidence="3">
    <location>
        <position position="42"/>
    </location>
</feature>
<feature type="modified residue" description="Phosphoserine" evidence="3">
    <location>
        <position position="64"/>
    </location>
</feature>
<feature type="modified residue" description="Phosphoserine" evidence="3">
    <location>
        <position position="402"/>
    </location>
</feature>
<feature type="modified residue" description="Phosphoserine" evidence="2">
    <location>
        <position position="414"/>
    </location>
</feature>
<feature type="modified residue" description="Phosphoserine" evidence="18">
    <location>
        <position position="423"/>
    </location>
</feature>
<feature type="modified residue" description="Phosphoserine" evidence="3">
    <location>
        <position position="442"/>
    </location>
</feature>
<feature type="modified residue" description="Phosphoserine" evidence="3">
    <location>
        <position position="461"/>
    </location>
</feature>
<feature type="modified residue" description="Phosphoserine" evidence="18">
    <location>
        <position position="583"/>
    </location>
</feature>
<feature type="modified residue" description="Phosphoserine" evidence="18">
    <location>
        <position position="585"/>
    </location>
</feature>
<feature type="modified residue" description="Phosphoserine" evidence="2">
    <location>
        <position position="590"/>
    </location>
</feature>
<feature type="modified residue" description="Phosphoserine" evidence="18">
    <location>
        <position position="672"/>
    </location>
</feature>
<feature type="modified residue" description="Phosphoserine" evidence="18">
    <location>
        <position position="676"/>
    </location>
</feature>
<feature type="modified residue" description="Phosphoserine" evidence="2">
    <location>
        <position position="678"/>
    </location>
</feature>
<feature type="modified residue" description="Phosphoserine" evidence="18">
    <location>
        <position position="680"/>
    </location>
</feature>
<feature type="modified residue" description="Phosphoserine; by PKC" evidence="3">
    <location>
        <position position="682"/>
    </location>
</feature>
<feature type="cross-link" description="Glycyl lysine isopeptide (Lys-Gly) (interchain with G-Cter in SUMO2)" evidence="3">
    <location>
        <position position="484"/>
    </location>
</feature>
<feature type="splice variant" id="VSP_000190" description="In isoform 1." evidence="13">
    <location>
        <begin position="578"/>
        <end position="609"/>
    </location>
</feature>
<feature type="sequence variant" description="In strain: Milan normotensive and FHH hypertensive; no constriction of afferent arterioles in response to increased pressure and impaired renal blood flow autoregulation resulting in kidney disease in both strains; redistributes from the cell membrane to perinuclear location and disrupts the F-actin cytoskeleton in the kidney and renal vascular smooth muscle cells of FHH; elevated membrane expression of the iberiotoxin-sensitive potassium channel alpha and elevated iberiotoxin-sensitive potassium channel current in renal vascular smooth muscle cells of FHH; proteinuria, renal interstitial fibrosis, alterations in gromelural capillary pressure, increased permeability to albumin and impaired glomerular function in FHH after induction of hypertension." evidence="7 12">
    <original>K</original>
    <variation>Q</variation>
    <location>
        <position position="572"/>
    </location>
</feature>
<feature type="sequence conflict" description="In Ref. 1; AAC52277 and 2; no nucleotide entry." ref="1 2">
    <original>T</original>
    <variation>S</variation>
    <location>
        <position position="5"/>
    </location>
</feature>
<feature type="sequence conflict" description="In Ref. 1; AAC52277 and 2; no nucleotide entry." ref="1 2">
    <original>Q</original>
    <variation>E</variation>
    <location>
        <position position="47"/>
    </location>
</feature>
<feature type="sequence conflict" description="In Ref. 1; AAC52277 and 2; no nucleotide entry." ref="1 2">
    <original>I</original>
    <variation>T</variation>
    <location>
        <position position="75"/>
    </location>
</feature>
<feature type="sequence conflict" description="In Ref. 1; AAC52277 and 2; no nucleotide entry." ref="1 2">
    <original>K</original>
    <variation>E</variation>
    <location>
        <position position="140"/>
    </location>
</feature>
<feature type="sequence conflict" description="In Ref. 1; AAC52277 and 2; no nucleotide entry." ref="1 2">
    <original>S</original>
    <variation>P</variation>
    <location>
        <position position="180"/>
    </location>
</feature>
<feature type="sequence conflict" description="In Ref. 1; AAC52277." ref="1">
    <original>K</original>
    <variation>Q</variation>
    <location>
        <position position="572"/>
    </location>
</feature>
<feature type="sequence conflict" description="In Ref. 1; AAC52277." evidence="15" ref="1">
    <original>EKVEA</original>
    <variation>GES</variation>
    <location>
        <begin position="701"/>
        <end position="705"/>
    </location>
</feature>
<comment type="function">
    <text evidence="2 3 6 7 8 9 10">Membrane-cytoskeleton-associated protein that promotes the assembly of the spectrin-actin network. Plays a role in actin filament capping. Binds to calmodulin (By similarity). Involved in myogenic reactivity of the renal afferent arteriole (Af-art), renal interlobular arteries and middle cerebral artery (MCA) to increased perfusion pressure (PubMed:27927653, PubMed:32029431, PubMed:32830539). Involved in regulation of potassium channels in the vascular smooth muscle cells (VSMCs) of the Af-art and MCA ex vivo (PubMed:27927653, PubMed:32029431). Involved in regulation of glomerular capillary pressure, glomerular filtration rate (GFR) and glomerular nephrin expression in response to hypertension (PubMed:32830539, PubMed:33414130). Involved in renal blood flow (RBF) autoregulation (PubMed:32029431, PubMed:32830539, PubMed:33414130). Plays a role in podocyte structure and function. Regulates globular monomer actin (G-actin) and filamentous polymer actin (F-actin) ratios in the primary podocytes affecting actin cytoskeleton organization. Regulates expression of synaptopodin, RhoA, Rac1 and CDC42 in the renal cortex and the primary podocytes. Regulates expression of nephrin in the glomeruli and in the primary podocytes, expression of nephrin and podocinin in the renal cortex, and expression of focal adhesion proteins integrin alpha-3 and integrin beta-1 in the glomeruli. Involved in cell migration and cell adhesion of podocytes, and in podocyte foot process effacement (PubMed:33308016). Regulates expression of profibrotics markers MMP2, MMP9, TGF beta-1, tubular tight junction protein E-cadherin, and mesenchymal markers vimentin and alpha-SMA (PubMed:33414130). Promotes the growth of neurites (By similarity).</text>
</comment>
<comment type="subunit">
    <text evidence="11">Heterodimer of an alpha and a gamma subunit.</text>
</comment>
<comment type="subcellular location">
    <subcellularLocation>
        <location evidence="11">Cytoplasm</location>
        <location evidence="11">Cytoskeleton</location>
    </subcellularLocation>
    <subcellularLocation>
        <location evidence="7 9">Cell membrane</location>
        <topology>Peripheral membrane protein</topology>
        <orientation>Cytoplasmic side</orientation>
    </subcellularLocation>
    <subcellularLocation>
        <location evidence="2">Cytoplasm</location>
    </subcellularLocation>
    <text evidence="2">Full-length protein and the cleavage fragment 358-706 localize mainly to the cytoplasm, while cleavage fragment 1-357 translocates from the cytoplasm to the nucleus.</text>
</comment>
<comment type="alternative products">
    <event type="alternative splicing"/>
    <isoform>
        <id>Q62847-1</id>
        <name>2</name>
        <name>Long</name>
        <sequence type="displayed"/>
    </isoform>
    <isoform>
        <id>Q62847-2</id>
        <name>1</name>
        <name>Short</name>
        <sequence type="described" ref="VSP_000190"/>
    </isoform>
    <text>Additional isoforms seem to exist.</text>
</comment>
<comment type="tissue specificity">
    <molecule>Isoform 2</molecule>
    <text evidence="12">Expressed in kidney, brain, spleen, liver and heart.</text>
</comment>
<comment type="tissue specificity">
    <molecule>Isoform 1</molecule>
    <text evidence="12">Expressed in kidney, brain, spleen, liver and heart.</text>
</comment>
<comment type="tissue specificity">
    <text evidence="7 8 9">Expressed in renal interlobular arteries, afferent/efferent arterioles, parietal glomerular epithelial cells and microvilli of the luminal surface of the proximal tubule (at protein level) (PubMed:32830539). Expressed in podocytes (at protein level) (PubMed:32830539, PubMed:33308016) Expressed in renal cortex (at protein level) (PubMed:32029431, PubMed:32830539, PubMed:33308016). Expressed in primary vascular smooth muscle cells (VSMCs) of the kidney (at protein level) (PubMed:32029431). Expressed in tubular cells and glomeruli (at protein level) (PubMed:33308016).</text>
</comment>
<comment type="domain">
    <text>Comprised of three regions: a N-terminal protease-resistant globular head region, a short connecting subdomain, and a protease-sensitive tail region.</text>
</comment>
<comment type="PTM">
    <text evidence="1">Sumoylated.</text>
</comment>
<comment type="PTM">
    <text evidence="2">Proteolytically cleaved by asparagine endopeptidase (AEP) into 2 fragments. Overexpression of the 1-357 fragment induces neuronal apoptosis, and overexpression of either 1-357 or 358-706 fragment increases the degeneration of dendritic spines. Overexpression of the 1-357 fragment impairs neurite outgrowth by downregulating the expression of Rac2, and induces synaptic dysfunction and cognitive impairments in tau P301S transgenic mice, a mouse model for Alzheimer disease (AD).</text>
</comment>
<comment type="disruption phenotype">
    <text evidence="6 7 8 10">Renal afferent arteriole (Af-art) of the Dicer-substrate short interfering RNA (DsiRNA) knockdown rats dilates instead of constricts as the wild-type vessel in response to an elevation in perfusion pressure. Knockdown results in impaired myogenic response in the middle cerebral artery (MCA), but vasoconstrictor response to serotonin is not affected in the presence of iberiotoxin (IBTX). Knockdown has no effect on the vasoconstrictor response of the renal Af-art to norepinephrine. Smooth muscle cells isolated from the renal microvessels or MCAs of the knockdown rats have higher peak potassium currents than the wild-type cells. A significantly higher level of IBTX-sensitive peak potassium current densities are detected in smooth muscle cells of the cerebral microvessels of the knockdown rats (PubMed:27927653). Knockout rats have elevated iberiotoxin-sensitive potassium (BK) channel current in renal vascular smooth muscle cells (VSMCs) and exhibit impairments in the myogenic response of Af-arts (PubMed:32029431). Renal blood flow (RBF) autoregulation is also impaired (PubMed:32029431, PubMed:32830539). Knockout rats have decreased glomerular capillary pressure in response to elevated blood pressure. After 1 week of DOCA-salt induced hypertension the glomerular filtration rate (GFR) increases and glomerular nephrin expression decreases while they remain unchanged in wild-type rats. Myogenic response is impaired in interlobular arteries of the knockout rats. Proteinuria, glomerulosclerosis and renal interstitial fibrosis are more pronounced in knockout rats after 3 weeks of hypertension compared to wild-type rats. Expression of macrophage-related proinflammatory cytokines, infiltrating CD68(+) macrophages and the markers of epithelial mesenchymal transition increase after hypertension. These alterations in hypertensive knockout rats lead to increased transmission of pressure to glomeruli inducing podocyte loss, and accelerated progression of chronic kidney disease (CKD) (PubMed:32830539). Acute administration of N(G)-nitro-L-arginine methyl ester (L-NAME) raises mean arterial pressure (MAP) of the knockout rats as in wild-type, but RBF and GFR are decreased less in knockout rats. However, RBF and GFR are significantly greater in knockout rats than in wild-type after the simultaneous administration of L-NAME and furosemide. Chronic administration of L-NAME with a simultaneous high-salt diet leads to impaired renal vasoconstrictor response to the blockade of nitric oxide synthase, which promotes hypertension-induced proteinuria and renal injury in knockout rats. After chronic administration of L-NAME, MAP increases in the knockout rats the same way as in wild-type, but RBF, GFR and glomerular capillary pressure are increased. They have greater loss of podocytes and glomerular nephrin expression than wild-type rats, and increased renal interstitial fibrosis. Expression of the profibrotics markers MMP9, MMP2 and TGF beta-1 increases more in L-NAME-treated knockout rats than in wild-type rats. Expression of tubular tight junction protein E-cadherin decreases more in knockout rats treated with L-NAME and high-salt diet for 3 weeks in association with greater expression of mesenchymal markers vimentin and alpha-SMA compared to wild-type (PubMed:33414130).</text>
</comment>
<comment type="similarity">
    <text evidence="15">Belongs to the aldolase class II family. Adducin subfamily.</text>
</comment>
<dbReference type="EMBL" id="U35775">
    <property type="protein sequence ID" value="AAC52277.1"/>
    <property type="molecule type" value="mRNA"/>
</dbReference>
<dbReference type="EMBL" id="CH473986">
    <property type="protein sequence ID" value="EDL94414.1"/>
    <property type="molecule type" value="Genomic_DNA"/>
</dbReference>
<dbReference type="EMBL" id="CH473986">
    <property type="protein sequence ID" value="EDL94415.1"/>
    <property type="molecule type" value="Genomic_DNA"/>
</dbReference>
<dbReference type="EMBL" id="CH473986">
    <property type="protein sequence ID" value="EDL94416.1"/>
    <property type="molecule type" value="Genomic_DNA"/>
</dbReference>
<dbReference type="RefSeq" id="NP_001157575.1">
    <molecule id="Q62847-1"/>
    <property type="nucleotide sequence ID" value="NM_001164103.1"/>
</dbReference>
<dbReference type="RefSeq" id="NP_113740.2">
    <molecule id="Q62847-2"/>
    <property type="nucleotide sequence ID" value="NM_031552.2"/>
</dbReference>
<dbReference type="RefSeq" id="XP_006231661.1">
    <molecule id="Q62847-1"/>
    <property type="nucleotide sequence ID" value="XM_006231599.5"/>
</dbReference>
<dbReference type="RefSeq" id="XP_006231662.1">
    <molecule id="Q62847-1"/>
    <property type="nucleotide sequence ID" value="XM_006231600.5"/>
</dbReference>
<dbReference type="RefSeq" id="XP_006231663.1">
    <molecule id="Q62847-1"/>
    <property type="nucleotide sequence ID" value="XM_006231601.5"/>
</dbReference>
<dbReference type="RefSeq" id="XP_006231664.1">
    <property type="nucleotide sequence ID" value="XM_006231602.3"/>
</dbReference>
<dbReference type="RefSeq" id="XP_008758732.1">
    <molecule id="Q62847-1"/>
    <property type="nucleotide sequence ID" value="XM_008760510.4"/>
</dbReference>
<dbReference type="RefSeq" id="XP_038957376.1">
    <molecule id="Q62847-1"/>
    <property type="nucleotide sequence ID" value="XM_039101448.2"/>
</dbReference>
<dbReference type="RefSeq" id="XP_063137466.1">
    <molecule id="Q62847-1"/>
    <property type="nucleotide sequence ID" value="XM_063281396.1"/>
</dbReference>
<dbReference type="RefSeq" id="XP_063137484.1">
    <molecule id="Q62847-2"/>
    <property type="nucleotide sequence ID" value="XM_063281414.1"/>
</dbReference>
<dbReference type="RefSeq" id="XP_063137495.1">
    <molecule id="Q62847-2"/>
    <property type="nucleotide sequence ID" value="XM_063281425.1"/>
</dbReference>
<dbReference type="SMR" id="Q62847"/>
<dbReference type="BioGRID" id="247271">
    <property type="interactions" value="1"/>
</dbReference>
<dbReference type="FunCoup" id="Q62847">
    <property type="interactions" value="2656"/>
</dbReference>
<dbReference type="STRING" id="10116.ENSRNOP00000043399"/>
<dbReference type="iPTMnet" id="Q62847"/>
<dbReference type="PhosphoSitePlus" id="Q62847"/>
<dbReference type="jPOST" id="Q62847"/>
<dbReference type="PaxDb" id="10116-ENSRNOP00000043399"/>
<dbReference type="Ensembl" id="ENSRNOT00000017600.7">
    <molecule id="Q62847-2"/>
    <property type="protein sequence ID" value="ENSRNOP00000017600.5"/>
    <property type="gene ID" value="ENSRNOG00000012820.9"/>
</dbReference>
<dbReference type="Ensembl" id="ENSRNOT00000044827.7">
    <molecule id="Q62847-1"/>
    <property type="protein sequence ID" value="ENSRNOP00000043399.3"/>
    <property type="gene ID" value="ENSRNOG00000012820.9"/>
</dbReference>
<dbReference type="GeneID" id="25230"/>
<dbReference type="KEGG" id="rno:25230"/>
<dbReference type="AGR" id="RGD:2043"/>
<dbReference type="CTD" id="120"/>
<dbReference type="RGD" id="2043">
    <property type="gene designation" value="Add3"/>
</dbReference>
<dbReference type="eggNOG" id="KOG3699">
    <property type="taxonomic scope" value="Eukaryota"/>
</dbReference>
<dbReference type="GeneTree" id="ENSGT00940000155257"/>
<dbReference type="HOGENOM" id="CLU_006033_9_2_1"/>
<dbReference type="InParanoid" id="Q62847"/>
<dbReference type="OMA" id="XVRISKE"/>
<dbReference type="PhylomeDB" id="Q62847"/>
<dbReference type="TreeFam" id="TF313003"/>
<dbReference type="Reactome" id="R-RNO-5223345">
    <property type="pathway name" value="Miscellaneous transport and binding events"/>
</dbReference>
<dbReference type="Reactome" id="R-RNO-9013405">
    <property type="pathway name" value="RHOD GTPase cycle"/>
</dbReference>
<dbReference type="Reactome" id="R-RNO-9035034">
    <property type="pathway name" value="RHOF GTPase cycle"/>
</dbReference>
<dbReference type="PRO" id="PR:Q62847"/>
<dbReference type="Proteomes" id="UP000002494">
    <property type="component" value="Chromosome 1"/>
</dbReference>
<dbReference type="Proteomes" id="UP000234681">
    <property type="component" value="Chromosome 1"/>
</dbReference>
<dbReference type="Bgee" id="ENSRNOG00000012820">
    <property type="expression patterns" value="Expressed in spleen and 19 other cell types or tissues"/>
</dbReference>
<dbReference type="GO" id="GO:0005903">
    <property type="term" value="C:brush border"/>
    <property type="evidence" value="ECO:0000266"/>
    <property type="project" value="RGD"/>
</dbReference>
<dbReference type="GO" id="GO:0005938">
    <property type="term" value="C:cell cortex"/>
    <property type="evidence" value="ECO:0000266"/>
    <property type="project" value="RGD"/>
</dbReference>
<dbReference type="GO" id="GO:0005911">
    <property type="term" value="C:cell-cell junction"/>
    <property type="evidence" value="ECO:0000266"/>
    <property type="project" value="RGD"/>
</dbReference>
<dbReference type="GO" id="GO:0000794">
    <property type="term" value="C:condensed nuclear chromosome"/>
    <property type="evidence" value="ECO:0000266"/>
    <property type="project" value="RGD"/>
</dbReference>
<dbReference type="GO" id="GO:0005737">
    <property type="term" value="C:cytoplasm"/>
    <property type="evidence" value="ECO:0000266"/>
    <property type="project" value="RGD"/>
</dbReference>
<dbReference type="GO" id="GO:0005856">
    <property type="term" value="C:cytoskeleton"/>
    <property type="evidence" value="ECO:0000266"/>
    <property type="project" value="RGD"/>
</dbReference>
<dbReference type="GO" id="GO:0016020">
    <property type="term" value="C:membrane"/>
    <property type="evidence" value="ECO:0000266"/>
    <property type="project" value="RGD"/>
</dbReference>
<dbReference type="GO" id="GO:0005886">
    <property type="term" value="C:plasma membrane"/>
    <property type="evidence" value="ECO:0000318"/>
    <property type="project" value="GO_Central"/>
</dbReference>
<dbReference type="GO" id="GO:0014069">
    <property type="term" value="C:postsynaptic density"/>
    <property type="evidence" value="ECO:0000266"/>
    <property type="project" value="RGD"/>
</dbReference>
<dbReference type="GO" id="GO:0051015">
    <property type="term" value="F:actin filament binding"/>
    <property type="evidence" value="ECO:0000318"/>
    <property type="project" value="GO_Central"/>
</dbReference>
<dbReference type="GO" id="GO:0005516">
    <property type="term" value="F:calmodulin binding"/>
    <property type="evidence" value="ECO:0007669"/>
    <property type="project" value="UniProtKB-KW"/>
</dbReference>
<dbReference type="GO" id="GO:0005080">
    <property type="term" value="F:protein kinase C binding"/>
    <property type="evidence" value="ECO:0000314"/>
    <property type="project" value="RGD"/>
</dbReference>
<dbReference type="GO" id="GO:0005200">
    <property type="term" value="F:structural constituent of cytoskeleton"/>
    <property type="evidence" value="ECO:0000266"/>
    <property type="project" value="RGD"/>
</dbReference>
<dbReference type="GO" id="GO:0051016">
    <property type="term" value="P:barbed-end actin filament capping"/>
    <property type="evidence" value="ECO:0000318"/>
    <property type="project" value="GO_Central"/>
</dbReference>
<dbReference type="GO" id="GO:0051495">
    <property type="term" value="P:positive regulation of cytoskeleton organization"/>
    <property type="evidence" value="ECO:0000315"/>
    <property type="project" value="RGD"/>
</dbReference>
<dbReference type="GO" id="GO:0045907">
    <property type="term" value="P:positive regulation of vasoconstriction"/>
    <property type="evidence" value="ECO:0000315"/>
    <property type="project" value="RGD"/>
</dbReference>
<dbReference type="GO" id="GO:0009410">
    <property type="term" value="P:response to xenobiotic stimulus"/>
    <property type="evidence" value="ECO:0000314"/>
    <property type="project" value="RGD"/>
</dbReference>
<dbReference type="FunFam" id="3.40.225.10:FF:000004">
    <property type="entry name" value="gamma-adducin isoform X1"/>
    <property type="match status" value="1"/>
</dbReference>
<dbReference type="Gene3D" id="3.40.225.10">
    <property type="entry name" value="Class II aldolase/adducin N-terminal domain"/>
    <property type="match status" value="1"/>
</dbReference>
<dbReference type="InterPro" id="IPR051017">
    <property type="entry name" value="Aldolase-II_Adducin_sf"/>
</dbReference>
<dbReference type="InterPro" id="IPR001303">
    <property type="entry name" value="Aldolase_II/adducin_N"/>
</dbReference>
<dbReference type="InterPro" id="IPR036409">
    <property type="entry name" value="Aldolase_II/adducin_N_sf"/>
</dbReference>
<dbReference type="PANTHER" id="PTHR10672">
    <property type="entry name" value="ADDUCIN"/>
    <property type="match status" value="1"/>
</dbReference>
<dbReference type="PANTHER" id="PTHR10672:SF5">
    <property type="entry name" value="GAMMA-ADDUCIN"/>
    <property type="match status" value="1"/>
</dbReference>
<dbReference type="Pfam" id="PF00596">
    <property type="entry name" value="Aldolase_II"/>
    <property type="match status" value="1"/>
</dbReference>
<dbReference type="SMART" id="SM01007">
    <property type="entry name" value="Aldolase_II"/>
    <property type="match status" value="1"/>
</dbReference>
<dbReference type="SUPFAM" id="SSF53639">
    <property type="entry name" value="AraD/HMP-PK domain-like"/>
    <property type="match status" value="1"/>
</dbReference>
<name>ADDG_RAT</name>